<reference key="1">
    <citation type="journal article" date="2005" name="Nature">
        <title>The map-based sequence of the rice genome.</title>
        <authorList>
            <consortium name="International rice genome sequencing project (IRGSP)"/>
        </authorList>
    </citation>
    <scope>NUCLEOTIDE SEQUENCE [LARGE SCALE GENOMIC DNA]</scope>
    <source>
        <strain>cv. Nipponbare</strain>
    </source>
</reference>
<reference key="2">
    <citation type="journal article" date="2008" name="Nucleic Acids Res.">
        <title>The rice annotation project database (RAP-DB): 2008 update.</title>
        <authorList>
            <consortium name="The rice annotation project (RAP)"/>
        </authorList>
    </citation>
    <scope>GENOME REANNOTATION</scope>
    <source>
        <strain>cv. Nipponbare</strain>
    </source>
</reference>
<reference key="3">
    <citation type="journal article" date="2013" name="Rice">
        <title>Improvement of the Oryza sativa Nipponbare reference genome using next generation sequence and optical map data.</title>
        <authorList>
            <person name="Kawahara Y."/>
            <person name="de la Bastide M."/>
            <person name="Hamilton J.P."/>
            <person name="Kanamori H."/>
            <person name="McCombie W.R."/>
            <person name="Ouyang S."/>
            <person name="Schwartz D.C."/>
            <person name="Tanaka T."/>
            <person name="Wu J."/>
            <person name="Zhou S."/>
            <person name="Childs K.L."/>
            <person name="Davidson R.M."/>
            <person name="Lin H."/>
            <person name="Quesada-Ocampo L."/>
            <person name="Vaillancourt B."/>
            <person name="Sakai H."/>
            <person name="Lee S.S."/>
            <person name="Kim J."/>
            <person name="Numa H."/>
            <person name="Itoh T."/>
            <person name="Buell C.R."/>
            <person name="Matsumoto T."/>
        </authorList>
    </citation>
    <scope>GENOME REANNOTATION</scope>
    <source>
        <strain>cv. Nipponbare</strain>
    </source>
</reference>
<reference key="4">
    <citation type="journal article" date="2005" name="PLoS Biol.">
        <title>The genomes of Oryza sativa: a history of duplications.</title>
        <authorList>
            <person name="Yu J."/>
            <person name="Wang J."/>
            <person name="Lin W."/>
            <person name="Li S."/>
            <person name="Li H."/>
            <person name="Zhou J."/>
            <person name="Ni P."/>
            <person name="Dong W."/>
            <person name="Hu S."/>
            <person name="Zeng C."/>
            <person name="Zhang J."/>
            <person name="Zhang Y."/>
            <person name="Li R."/>
            <person name="Xu Z."/>
            <person name="Li S."/>
            <person name="Li X."/>
            <person name="Zheng H."/>
            <person name="Cong L."/>
            <person name="Lin L."/>
            <person name="Yin J."/>
            <person name="Geng J."/>
            <person name="Li G."/>
            <person name="Shi J."/>
            <person name="Liu J."/>
            <person name="Lv H."/>
            <person name="Li J."/>
            <person name="Wang J."/>
            <person name="Deng Y."/>
            <person name="Ran L."/>
            <person name="Shi X."/>
            <person name="Wang X."/>
            <person name="Wu Q."/>
            <person name="Li C."/>
            <person name="Ren X."/>
            <person name="Wang J."/>
            <person name="Wang X."/>
            <person name="Li D."/>
            <person name="Liu D."/>
            <person name="Zhang X."/>
            <person name="Ji Z."/>
            <person name="Zhao W."/>
            <person name="Sun Y."/>
            <person name="Zhang Z."/>
            <person name="Bao J."/>
            <person name="Han Y."/>
            <person name="Dong L."/>
            <person name="Ji J."/>
            <person name="Chen P."/>
            <person name="Wu S."/>
            <person name="Liu J."/>
            <person name="Xiao Y."/>
            <person name="Bu D."/>
            <person name="Tan J."/>
            <person name="Yang L."/>
            <person name="Ye C."/>
            <person name="Zhang J."/>
            <person name="Xu J."/>
            <person name="Zhou Y."/>
            <person name="Yu Y."/>
            <person name="Zhang B."/>
            <person name="Zhuang S."/>
            <person name="Wei H."/>
            <person name="Liu B."/>
            <person name="Lei M."/>
            <person name="Yu H."/>
            <person name="Li Y."/>
            <person name="Xu H."/>
            <person name="Wei S."/>
            <person name="He X."/>
            <person name="Fang L."/>
            <person name="Zhang Z."/>
            <person name="Zhang Y."/>
            <person name="Huang X."/>
            <person name="Su Z."/>
            <person name="Tong W."/>
            <person name="Li J."/>
            <person name="Tong Z."/>
            <person name="Li S."/>
            <person name="Ye J."/>
            <person name="Wang L."/>
            <person name="Fang L."/>
            <person name="Lei T."/>
            <person name="Chen C.-S."/>
            <person name="Chen H.-C."/>
            <person name="Xu Z."/>
            <person name="Li H."/>
            <person name="Huang H."/>
            <person name="Zhang F."/>
            <person name="Xu H."/>
            <person name="Li N."/>
            <person name="Zhao C."/>
            <person name="Li S."/>
            <person name="Dong L."/>
            <person name="Huang Y."/>
            <person name="Li L."/>
            <person name="Xi Y."/>
            <person name="Qi Q."/>
            <person name="Li W."/>
            <person name="Zhang B."/>
            <person name="Hu W."/>
            <person name="Zhang Y."/>
            <person name="Tian X."/>
            <person name="Jiao Y."/>
            <person name="Liang X."/>
            <person name="Jin J."/>
            <person name="Gao L."/>
            <person name="Zheng W."/>
            <person name="Hao B."/>
            <person name="Liu S.-M."/>
            <person name="Wang W."/>
            <person name="Yuan L."/>
            <person name="Cao M."/>
            <person name="McDermott J."/>
            <person name="Samudrala R."/>
            <person name="Wang J."/>
            <person name="Wong G.K.-S."/>
            <person name="Yang H."/>
        </authorList>
    </citation>
    <scope>NUCLEOTIDE SEQUENCE [LARGE SCALE GENOMIC DNA]</scope>
    <source>
        <strain evidence="11">cv. Nipponbare</strain>
    </source>
</reference>
<reference key="5">
    <citation type="submission" date="2007-09" db="EMBL/GenBank/DDBJ databases">
        <title>Oryza sativa full length cDNA.</title>
        <authorList>
            <consortium name="The rice full-length cDNA consortium"/>
        </authorList>
    </citation>
    <scope>NUCLEOTIDE SEQUENCE [LARGE SCALE MRNA]</scope>
    <source>
        <strain>cv. Nipponbare</strain>
    </source>
</reference>
<reference key="6">
    <citation type="journal article" date="2009" name="Ann. Bot.">
        <title>Evaluating the microtubule cytoskeleton and its interacting proteins in monocots by mining the rice genome.</title>
        <authorList>
            <person name="Guo L."/>
            <person name="Ho C.M."/>
            <person name="Kong Z."/>
            <person name="Lee Y.R."/>
            <person name="Qian Q."/>
            <person name="Liu B."/>
        </authorList>
    </citation>
    <scope>GENE FAMILY</scope>
    <scope>NOMENCLATURE</scope>
</reference>
<reference key="7">
    <citation type="journal article" date="2011" name="Plant Cell">
        <title>Pollen semi-sterility1 encodes a kinesin-1-like protein important for male meiosis, anther dehiscence, and fertility in rice.</title>
        <authorList>
            <person name="Zhou S."/>
            <person name="Wang Y."/>
            <person name="Li W."/>
            <person name="Zhao Z."/>
            <person name="Ren Y."/>
            <person name="Wang Y."/>
            <person name="Gu S."/>
            <person name="Lin Q."/>
            <person name="Wang D."/>
            <person name="Jiang L."/>
            <person name="Su N."/>
            <person name="Zhang X."/>
            <person name="Liu L."/>
            <person name="Cheng Z."/>
            <person name="Lei C."/>
            <person name="Wang J."/>
            <person name="Guo X."/>
            <person name="Wu F."/>
            <person name="Ikehashi H."/>
            <person name="Wang H."/>
            <person name="Wan J."/>
        </authorList>
    </citation>
    <scope>IDENTIFICATION</scope>
    <scope>FUNCTION</scope>
    <scope>SUBCELLULAR LOCATION</scope>
    <scope>TISSUE SPECIFICITY</scope>
    <scope>DEVELOPMENTAL STAGE</scope>
    <scope>MUTAGENESIS OF ARG-289</scope>
    <source>
        <tissue evidence="10">Panicle</tissue>
    </source>
</reference>
<feature type="chain" id="PRO_0000417974" description="Kinesin-like protein KIN-1">
    <location>
        <begin position="1"/>
        <end position="477"/>
    </location>
</feature>
<feature type="domain" description="Kinesin motor" evidence="3">
    <location>
        <begin position="3"/>
        <end position="330"/>
    </location>
</feature>
<feature type="coiled-coil region" evidence="2">
    <location>
        <begin position="402"/>
        <end position="451"/>
    </location>
</feature>
<feature type="binding site" evidence="1 3">
    <location>
        <begin position="86"/>
        <end position="93"/>
    </location>
    <ligand>
        <name>ATP</name>
        <dbReference type="ChEBI" id="CHEBI:30616"/>
    </ligand>
</feature>
<feature type="splice variant" id="VSP_043950" description="In isoform 2." evidence="6">
    <original>QMNLASSRSHCLYIFSV</original>
    <variation>L</variation>
    <location>
        <begin position="200"/>
        <end position="216"/>
    </location>
</feature>
<feature type="splice variant" id="VSP_043951" description="In isoform 2." evidence="6">
    <original>GGNSRAALLCCCSPSASNAPESLSTVRFGT</original>
    <variation>HLS</variation>
    <location>
        <begin position="296"/>
        <end position="325"/>
    </location>
</feature>
<feature type="mutagenesis site" description="Diminished microtubule-stimulated ATPase activity, abnormal chromosome congression and segregation and reduced spikelet fertility caused jointly by reduced pollen viability and defective anther dehiscence." evidence="5">
    <original>R</original>
    <variation>H</variation>
    <location>
        <position position="289"/>
    </location>
</feature>
<comment type="function">
    <text evidence="5">Kinesin-like motor protein that exhibits microtubule-stimulated ATPase activity. Plays an essential role in male meiotic chromosomal dynamics, male gametogenesis and anther dehiscence. May play a minor and nonessential role in regulating meiotic spindle formation.</text>
</comment>
<comment type="subcellular location">
    <subcellularLocation>
        <location evidence="5">Cytoplasm</location>
    </subcellularLocation>
</comment>
<comment type="alternative products">
    <event type="alternative splicing"/>
    <isoform>
        <id>F9W301-1</id>
        <name evidence="5">1</name>
        <sequence type="displayed"/>
    </isoform>
    <isoform>
        <id>F9W301-2</id>
        <name evidence="4">2</name>
        <sequence type="described" ref="VSP_043950 VSP_043951"/>
    </isoform>
</comment>
<comment type="tissue specificity">
    <text evidence="5">Widely expressed. Expressed in young roots and leaves, in mature roots, culm, sheath and leaves, and in panicles at various developmental stages. Strongest expression is detected in panicles. In the panicle, expression is detected in anthers, glumme, lemma and palea. In the spikelet, expression is detected in both microsporocyte and the anther walls.</text>
</comment>
<comment type="developmental stage">
    <text evidence="5">Expressed during plant development. During young panicle development, highest expression is observed at P4-P5 stages followed by a gradual decline until becomes nearly undetectable at 8 days after heading. Expression is significantly up-regulated during anther development and peaks during male meiosis. Expression disappears in postmeiosis anther.</text>
</comment>
<comment type="similarity">
    <text evidence="7">Belongs to the TRAFAC class myosin-kinesin ATPase superfamily. Kinesin family. KIN-1 subfamily.</text>
</comment>
<comment type="sequence caution" evidence="9">
    <conflict type="erroneous gene model prediction">
        <sequence resource="EMBL-CDS" id="BAD33096"/>
    </conflict>
</comment>
<comment type="sequence caution" evidence="9">
    <conflict type="erroneous gene model prediction">
        <sequence resource="EMBL-CDS" id="BAF22772"/>
    </conflict>
</comment>
<keyword id="KW-0025">Alternative splicing</keyword>
<keyword id="KW-0067">ATP-binding</keyword>
<keyword id="KW-0175">Coiled coil</keyword>
<keyword id="KW-0963">Cytoplasm</keyword>
<keyword id="KW-0493">Microtubule</keyword>
<keyword id="KW-0505">Motor protein</keyword>
<keyword id="KW-0547">Nucleotide-binding</keyword>
<keyword id="KW-1185">Reference proteome</keyword>
<name>KN1_ORYSJ</name>
<sequence length="477" mass="52130">MSNVTVCVRFRPLSHKERKTNGDKVCFKRLDSESFVFKDEREEDVIFSFDRVFYEDAEQSDVYNFLAVPIVADAISGINGTIITYGQTGAGKTYSMEGPSILHCNKQKTGLVQRVVDELFQSLQSSESMAMWSVKLSMVEIYLEKVRDLLDLSKDNLQIKESKTQGIYISGATEVSIQNSSDALECLSEGIANRAVGETQMNLASSRSHCLYIFSVQQGSTSDERVRGGKIILVDLAGSEKVEKTGAEGRVLDEAKTINKSLSVLGNVVNALTTGKPNHVPYRDSKLTRILQDALGGNSRAALLCCCSPSASNAPESLSTVRFGTRTKLIKTTPKSISPEVDSIKKPIPDSHGQNDLRDRILNKLRLSLKEEDVDLLEELFVQEGIIFDPNYSVADIDSACQDAASQEVSLLTQAVEELKETVEELTDENERLRGELELAQEAAAAAAAARADGALLGFVPAVAISSLLRPFGFVPD</sequence>
<proteinExistence type="evidence at protein level"/>
<protein>
    <recommendedName>
        <fullName evidence="9">Kinesin-like protein KIN-1</fullName>
    </recommendedName>
    <alternativeName>
        <fullName evidence="8 10">Kinesin-1-like protein PSS1</fullName>
    </alternativeName>
    <alternativeName>
        <fullName evidence="8">Pollen semi-sterility protein 1</fullName>
    </alternativeName>
</protein>
<gene>
    <name evidence="9" type="primary">KIN1</name>
    <name evidence="10" type="synonym">PSS1</name>
    <name type="ordered locus">Os08g0117000</name>
    <name type="ordered locus">LOC_Os08g02380</name>
    <name type="ORF">OsJ_25827</name>
    <name type="ORF">P0470F10.15</name>
</gene>
<dbReference type="EMBL" id="AP004562">
    <property type="protein sequence ID" value="BAD33096.1"/>
    <property type="status" value="ALT_SEQ"/>
    <property type="molecule type" value="Genomic_DNA"/>
</dbReference>
<dbReference type="EMBL" id="AP008214">
    <property type="protein sequence ID" value="BAF22772.2"/>
    <property type="status" value="ALT_SEQ"/>
    <property type="molecule type" value="Genomic_DNA"/>
</dbReference>
<dbReference type="EMBL" id="AP014964">
    <property type="protein sequence ID" value="BAT03561.1"/>
    <property type="molecule type" value="Genomic_DNA"/>
</dbReference>
<dbReference type="EMBL" id="CM000145">
    <property type="protein sequence ID" value="EEE67939.1"/>
    <property type="molecule type" value="Genomic_DNA"/>
</dbReference>
<dbReference type="EMBL" id="AK287457">
    <property type="status" value="NOT_ANNOTATED_CDS"/>
    <property type="molecule type" value="mRNA"/>
</dbReference>
<dbReference type="EMBL" id="BK007977">
    <property type="protein sequence ID" value="DAA34941.1"/>
    <property type="molecule type" value="Genomic_DNA"/>
</dbReference>
<dbReference type="RefSeq" id="XP_015649862.1">
    <property type="nucleotide sequence ID" value="XM_015794376.1"/>
</dbReference>
<dbReference type="RefSeq" id="XP_015649863.1">
    <property type="nucleotide sequence ID" value="XM_015794377.1"/>
</dbReference>
<dbReference type="RefSeq" id="XP_015649864.1">
    <molecule id="F9W301-1"/>
    <property type="nucleotide sequence ID" value="XM_015794378.1"/>
</dbReference>
<dbReference type="SMR" id="F9W301"/>
<dbReference type="FunCoup" id="F9W301">
    <property type="interactions" value="13"/>
</dbReference>
<dbReference type="STRING" id="39947.F9W301"/>
<dbReference type="PaxDb" id="39947-F9W301"/>
<dbReference type="EnsemblPlants" id="Os08t0117000-01">
    <molecule id="F9W301-1"/>
    <property type="protein sequence ID" value="Os08t0117000-01"/>
    <property type="gene ID" value="Os08g0117000"/>
</dbReference>
<dbReference type="GeneID" id="4344521"/>
<dbReference type="Gramene" id="Os08t0117000-01">
    <molecule id="F9W301-1"/>
    <property type="protein sequence ID" value="Os08t0117000-01"/>
    <property type="gene ID" value="Os08g0117000"/>
</dbReference>
<dbReference type="KEGG" id="dosa:Os08g0117000"/>
<dbReference type="KEGG" id="osa:4344521"/>
<dbReference type="eggNOG" id="KOG0240">
    <property type="taxonomic scope" value="Eukaryota"/>
</dbReference>
<dbReference type="HOGENOM" id="CLU_001485_2_13_1"/>
<dbReference type="InParanoid" id="F9W301"/>
<dbReference type="OMA" id="FYEDAQQ"/>
<dbReference type="OrthoDB" id="3176171at2759"/>
<dbReference type="Proteomes" id="UP000000763">
    <property type="component" value="Chromosome 8"/>
</dbReference>
<dbReference type="Proteomes" id="UP000007752">
    <property type="component" value="Chromosome 8"/>
</dbReference>
<dbReference type="Proteomes" id="UP000059680">
    <property type="component" value="Chromosome 8"/>
</dbReference>
<dbReference type="GO" id="GO:0005737">
    <property type="term" value="C:cytoplasm"/>
    <property type="evidence" value="ECO:0000318"/>
    <property type="project" value="GO_Central"/>
</dbReference>
<dbReference type="GO" id="GO:0005871">
    <property type="term" value="C:kinesin complex"/>
    <property type="evidence" value="ECO:0000318"/>
    <property type="project" value="GO_Central"/>
</dbReference>
<dbReference type="GO" id="GO:0005874">
    <property type="term" value="C:microtubule"/>
    <property type="evidence" value="ECO:0000318"/>
    <property type="project" value="GO_Central"/>
</dbReference>
<dbReference type="GO" id="GO:0005524">
    <property type="term" value="F:ATP binding"/>
    <property type="evidence" value="ECO:0007669"/>
    <property type="project" value="UniProtKB-KW"/>
</dbReference>
<dbReference type="GO" id="GO:0016887">
    <property type="term" value="F:ATP hydrolysis activity"/>
    <property type="evidence" value="ECO:0000318"/>
    <property type="project" value="GO_Central"/>
</dbReference>
<dbReference type="GO" id="GO:0008017">
    <property type="term" value="F:microtubule binding"/>
    <property type="evidence" value="ECO:0000318"/>
    <property type="project" value="GO_Central"/>
</dbReference>
<dbReference type="GO" id="GO:0008574">
    <property type="term" value="F:plus-end-directed microtubule motor activity"/>
    <property type="evidence" value="ECO:0000318"/>
    <property type="project" value="GO_Central"/>
</dbReference>
<dbReference type="GO" id="GO:0030705">
    <property type="term" value="P:cytoskeleton-dependent intracellular transport"/>
    <property type="evidence" value="ECO:0000318"/>
    <property type="project" value="GO_Central"/>
</dbReference>
<dbReference type="GO" id="GO:0007018">
    <property type="term" value="P:microtubule-based movement"/>
    <property type="evidence" value="ECO:0000318"/>
    <property type="project" value="GO_Central"/>
</dbReference>
<dbReference type="CDD" id="cd01369">
    <property type="entry name" value="KISc_KHC_KIF5"/>
    <property type="match status" value="1"/>
</dbReference>
<dbReference type="FunFam" id="3.40.850.10:FF:000114">
    <property type="entry name" value="Kinesin-like protein"/>
    <property type="match status" value="1"/>
</dbReference>
<dbReference type="Gene3D" id="3.40.850.10">
    <property type="entry name" value="Kinesin motor domain"/>
    <property type="match status" value="1"/>
</dbReference>
<dbReference type="InterPro" id="IPR027640">
    <property type="entry name" value="Kinesin-like_fam"/>
</dbReference>
<dbReference type="InterPro" id="IPR019821">
    <property type="entry name" value="Kinesin_motor_CS"/>
</dbReference>
<dbReference type="InterPro" id="IPR001752">
    <property type="entry name" value="Kinesin_motor_dom"/>
</dbReference>
<dbReference type="InterPro" id="IPR036961">
    <property type="entry name" value="Kinesin_motor_dom_sf"/>
</dbReference>
<dbReference type="InterPro" id="IPR027417">
    <property type="entry name" value="P-loop_NTPase"/>
</dbReference>
<dbReference type="PANTHER" id="PTHR47968">
    <property type="entry name" value="CENTROMERE PROTEIN E"/>
    <property type="match status" value="1"/>
</dbReference>
<dbReference type="PANTHER" id="PTHR47968:SF17">
    <property type="entry name" value="KINESIN-LIKE PROTEIN"/>
    <property type="match status" value="1"/>
</dbReference>
<dbReference type="Pfam" id="PF00225">
    <property type="entry name" value="Kinesin"/>
    <property type="match status" value="1"/>
</dbReference>
<dbReference type="PRINTS" id="PR00380">
    <property type="entry name" value="KINESINHEAVY"/>
</dbReference>
<dbReference type="SMART" id="SM00129">
    <property type="entry name" value="KISc"/>
    <property type="match status" value="1"/>
</dbReference>
<dbReference type="SUPFAM" id="SSF52540">
    <property type="entry name" value="P-loop containing nucleoside triphosphate hydrolases"/>
    <property type="match status" value="1"/>
</dbReference>
<dbReference type="PROSITE" id="PS00411">
    <property type="entry name" value="KINESIN_MOTOR_1"/>
    <property type="match status" value="1"/>
</dbReference>
<dbReference type="PROSITE" id="PS50067">
    <property type="entry name" value="KINESIN_MOTOR_2"/>
    <property type="match status" value="1"/>
</dbReference>
<accession>F9W301</accession>
<accession>A0A0P0XBE1</accession>
<accession>B9FYS2</accession>
<accession>Q0J8E3</accession>
<accession>Q69UI4</accession>
<evidence type="ECO:0000250" key="1">
    <source>
        <dbReference type="UniProtKB" id="P33176"/>
    </source>
</evidence>
<evidence type="ECO:0000255" key="2"/>
<evidence type="ECO:0000255" key="3">
    <source>
        <dbReference type="PROSITE-ProRule" id="PRU00283"/>
    </source>
</evidence>
<evidence type="ECO:0000269" key="4">
    <source>
    </source>
</evidence>
<evidence type="ECO:0000269" key="5">
    <source>
    </source>
</evidence>
<evidence type="ECO:0000303" key="6">
    <source>
    </source>
</evidence>
<evidence type="ECO:0000303" key="7">
    <source>
    </source>
</evidence>
<evidence type="ECO:0000303" key="8">
    <source>
    </source>
</evidence>
<evidence type="ECO:0000305" key="9"/>
<evidence type="ECO:0000312" key="10">
    <source>
        <dbReference type="EMBL" id="DAA34941.1"/>
    </source>
</evidence>
<evidence type="ECO:0000312" key="11">
    <source>
        <dbReference type="EMBL" id="EEE67939.1"/>
    </source>
</evidence>
<organism>
    <name type="scientific">Oryza sativa subsp. japonica</name>
    <name type="common">Rice</name>
    <dbReference type="NCBI Taxonomy" id="39947"/>
    <lineage>
        <taxon>Eukaryota</taxon>
        <taxon>Viridiplantae</taxon>
        <taxon>Streptophyta</taxon>
        <taxon>Embryophyta</taxon>
        <taxon>Tracheophyta</taxon>
        <taxon>Spermatophyta</taxon>
        <taxon>Magnoliopsida</taxon>
        <taxon>Liliopsida</taxon>
        <taxon>Poales</taxon>
        <taxon>Poaceae</taxon>
        <taxon>BOP clade</taxon>
        <taxon>Oryzoideae</taxon>
        <taxon>Oryzeae</taxon>
        <taxon>Oryzinae</taxon>
        <taxon>Oryza</taxon>
        <taxon>Oryza sativa</taxon>
    </lineage>
</organism>